<keyword id="KW-0963">Cytoplasm</keyword>
<keyword id="KW-0255">Endonuclease</keyword>
<keyword id="KW-0378">Hydrolase</keyword>
<keyword id="KW-0460">Magnesium</keyword>
<keyword id="KW-0479">Metal-binding</keyword>
<keyword id="KW-0540">Nuclease</keyword>
<keyword id="KW-1185">Reference proteome</keyword>
<evidence type="ECO:0000255" key="1">
    <source>
        <dbReference type="HAMAP-Rule" id="MF_00042"/>
    </source>
</evidence>
<evidence type="ECO:0000255" key="2">
    <source>
        <dbReference type="PROSITE-ProRule" id="PRU00408"/>
    </source>
</evidence>
<gene>
    <name evidence="1" type="primary">rnhA</name>
    <name type="ordered locus">DNO_1102</name>
</gene>
<reference key="1">
    <citation type="journal article" date="2007" name="Nat. Biotechnol.">
        <title>Genome sequence and identification of candidate vaccine antigens from the animal pathogen Dichelobacter nodosus.</title>
        <authorList>
            <person name="Myers G.S.A."/>
            <person name="Parker D."/>
            <person name="Al-Hasani K."/>
            <person name="Kennan R.M."/>
            <person name="Seemann T."/>
            <person name="Ren Q."/>
            <person name="Badger J.H."/>
            <person name="Selengut J.D."/>
            <person name="Deboy R.T."/>
            <person name="Tettelin H."/>
            <person name="Boyce J.D."/>
            <person name="McCarl V.P."/>
            <person name="Han X."/>
            <person name="Nelson W.C."/>
            <person name="Madupu R."/>
            <person name="Mohamoud Y."/>
            <person name="Holley T."/>
            <person name="Fedorova N."/>
            <person name="Khouri H."/>
            <person name="Bottomley S.P."/>
            <person name="Whittington R.J."/>
            <person name="Adler B."/>
            <person name="Songer J.G."/>
            <person name="Rood J.I."/>
            <person name="Paulsen I.T."/>
        </authorList>
    </citation>
    <scope>NUCLEOTIDE SEQUENCE [LARGE SCALE GENOMIC DNA]</scope>
    <source>
        <strain>VCS1703A</strain>
    </source>
</reference>
<comment type="function">
    <text evidence="1">Endonuclease that specifically degrades the RNA of RNA-DNA hybrids.</text>
</comment>
<comment type="catalytic activity">
    <reaction evidence="1">
        <text>Endonucleolytic cleavage to 5'-phosphomonoester.</text>
        <dbReference type="EC" id="3.1.26.4"/>
    </reaction>
</comment>
<comment type="cofactor">
    <cofactor evidence="1">
        <name>Mg(2+)</name>
        <dbReference type="ChEBI" id="CHEBI:18420"/>
    </cofactor>
    <text evidence="1">Binds 1 Mg(2+) ion per subunit. May bind a second metal ion at a regulatory site, or after substrate binding.</text>
</comment>
<comment type="subunit">
    <text evidence="1">Monomer.</text>
</comment>
<comment type="subcellular location">
    <subcellularLocation>
        <location evidence="1">Cytoplasm</location>
    </subcellularLocation>
</comment>
<comment type="similarity">
    <text evidence="1">Belongs to the RNase H family.</text>
</comment>
<name>RNH_DICNV</name>
<proteinExistence type="inferred from homology"/>
<sequence>MPAPILDIFVDGACKGNPGIGGWGVLMRYGQHEKVLMGAQWHTTNNRMELTAAIEALKAIKRPCPILISTDSVYVKNGITHWLPVWKKNNWRNASKKPIKNIELWQALDQLNQRYEIEWRWVKGHAGNPGNEIADELANRAIESLRQKTS</sequence>
<feature type="chain" id="PRO_0000332592" description="Ribonuclease H">
    <location>
        <begin position="1"/>
        <end position="150"/>
    </location>
</feature>
<feature type="domain" description="RNase H type-1" evidence="2">
    <location>
        <begin position="2"/>
        <end position="143"/>
    </location>
</feature>
<feature type="binding site" evidence="1">
    <location>
        <position position="11"/>
    </location>
    <ligand>
        <name>Mg(2+)</name>
        <dbReference type="ChEBI" id="CHEBI:18420"/>
        <label>1</label>
    </ligand>
</feature>
<feature type="binding site" evidence="1">
    <location>
        <position position="11"/>
    </location>
    <ligand>
        <name>Mg(2+)</name>
        <dbReference type="ChEBI" id="CHEBI:18420"/>
        <label>2</label>
    </ligand>
</feature>
<feature type="binding site" evidence="1">
    <location>
        <position position="49"/>
    </location>
    <ligand>
        <name>Mg(2+)</name>
        <dbReference type="ChEBI" id="CHEBI:18420"/>
        <label>1</label>
    </ligand>
</feature>
<feature type="binding site" evidence="1">
    <location>
        <position position="71"/>
    </location>
    <ligand>
        <name>Mg(2+)</name>
        <dbReference type="ChEBI" id="CHEBI:18420"/>
        <label>1</label>
    </ligand>
</feature>
<feature type="binding site" evidence="1">
    <location>
        <position position="135"/>
    </location>
    <ligand>
        <name>Mg(2+)</name>
        <dbReference type="ChEBI" id="CHEBI:18420"/>
        <label>2</label>
    </ligand>
</feature>
<dbReference type="EC" id="3.1.26.4" evidence="1"/>
<dbReference type="EMBL" id="CP000513">
    <property type="protein sequence ID" value="ABQ14019.1"/>
    <property type="molecule type" value="Genomic_DNA"/>
</dbReference>
<dbReference type="RefSeq" id="WP_012031406.1">
    <property type="nucleotide sequence ID" value="NC_009446.1"/>
</dbReference>
<dbReference type="SMR" id="A5EXP9"/>
<dbReference type="STRING" id="246195.DNO_1102"/>
<dbReference type="KEGG" id="dno:DNO_1102"/>
<dbReference type="eggNOG" id="COG0328">
    <property type="taxonomic scope" value="Bacteria"/>
</dbReference>
<dbReference type="HOGENOM" id="CLU_030894_6_0_6"/>
<dbReference type="OrthoDB" id="7845843at2"/>
<dbReference type="Proteomes" id="UP000000248">
    <property type="component" value="Chromosome"/>
</dbReference>
<dbReference type="GO" id="GO:0005737">
    <property type="term" value="C:cytoplasm"/>
    <property type="evidence" value="ECO:0007669"/>
    <property type="project" value="UniProtKB-SubCell"/>
</dbReference>
<dbReference type="GO" id="GO:0000287">
    <property type="term" value="F:magnesium ion binding"/>
    <property type="evidence" value="ECO:0007669"/>
    <property type="project" value="UniProtKB-UniRule"/>
</dbReference>
<dbReference type="GO" id="GO:0003676">
    <property type="term" value="F:nucleic acid binding"/>
    <property type="evidence" value="ECO:0007669"/>
    <property type="project" value="InterPro"/>
</dbReference>
<dbReference type="GO" id="GO:0004523">
    <property type="term" value="F:RNA-DNA hybrid ribonuclease activity"/>
    <property type="evidence" value="ECO:0007669"/>
    <property type="project" value="UniProtKB-UniRule"/>
</dbReference>
<dbReference type="GO" id="GO:0043137">
    <property type="term" value="P:DNA replication, removal of RNA primer"/>
    <property type="evidence" value="ECO:0007669"/>
    <property type="project" value="TreeGrafter"/>
</dbReference>
<dbReference type="CDD" id="cd09278">
    <property type="entry name" value="RNase_HI_prokaryote_like"/>
    <property type="match status" value="1"/>
</dbReference>
<dbReference type="FunFam" id="3.30.420.10:FF:000089">
    <property type="entry name" value="Ribonuclease H"/>
    <property type="match status" value="1"/>
</dbReference>
<dbReference type="Gene3D" id="3.30.420.10">
    <property type="entry name" value="Ribonuclease H-like superfamily/Ribonuclease H"/>
    <property type="match status" value="1"/>
</dbReference>
<dbReference type="HAMAP" id="MF_00042">
    <property type="entry name" value="RNase_H"/>
    <property type="match status" value="1"/>
</dbReference>
<dbReference type="InterPro" id="IPR050092">
    <property type="entry name" value="RNase_H"/>
</dbReference>
<dbReference type="InterPro" id="IPR012337">
    <property type="entry name" value="RNaseH-like_sf"/>
</dbReference>
<dbReference type="InterPro" id="IPR002156">
    <property type="entry name" value="RNaseH_domain"/>
</dbReference>
<dbReference type="InterPro" id="IPR036397">
    <property type="entry name" value="RNaseH_sf"/>
</dbReference>
<dbReference type="InterPro" id="IPR022892">
    <property type="entry name" value="RNaseHI"/>
</dbReference>
<dbReference type="NCBIfam" id="NF001236">
    <property type="entry name" value="PRK00203.1"/>
    <property type="match status" value="1"/>
</dbReference>
<dbReference type="PANTHER" id="PTHR10642">
    <property type="entry name" value="RIBONUCLEASE H1"/>
    <property type="match status" value="1"/>
</dbReference>
<dbReference type="PANTHER" id="PTHR10642:SF26">
    <property type="entry name" value="RIBONUCLEASE H1"/>
    <property type="match status" value="1"/>
</dbReference>
<dbReference type="Pfam" id="PF00075">
    <property type="entry name" value="RNase_H"/>
    <property type="match status" value="1"/>
</dbReference>
<dbReference type="SUPFAM" id="SSF53098">
    <property type="entry name" value="Ribonuclease H-like"/>
    <property type="match status" value="1"/>
</dbReference>
<dbReference type="PROSITE" id="PS50879">
    <property type="entry name" value="RNASE_H_1"/>
    <property type="match status" value="1"/>
</dbReference>
<organism>
    <name type="scientific">Dichelobacter nodosus (strain VCS1703A)</name>
    <dbReference type="NCBI Taxonomy" id="246195"/>
    <lineage>
        <taxon>Bacteria</taxon>
        <taxon>Pseudomonadati</taxon>
        <taxon>Pseudomonadota</taxon>
        <taxon>Gammaproteobacteria</taxon>
        <taxon>Cardiobacteriales</taxon>
        <taxon>Cardiobacteriaceae</taxon>
        <taxon>Dichelobacter</taxon>
    </lineage>
</organism>
<protein>
    <recommendedName>
        <fullName evidence="1">Ribonuclease H</fullName>
        <shortName evidence="1">RNase H</shortName>
        <ecNumber evidence="1">3.1.26.4</ecNumber>
    </recommendedName>
</protein>
<accession>A5EXP9</accession>